<name>NUOK2_CITBB</name>
<organism>
    <name type="scientific">Citrifermentans bemidjiense (strain ATCC BAA-1014 / DSM 16622 / JCM 12645 / Bem)</name>
    <name type="common">Geobacter bemidjiensis</name>
    <dbReference type="NCBI Taxonomy" id="404380"/>
    <lineage>
        <taxon>Bacteria</taxon>
        <taxon>Pseudomonadati</taxon>
        <taxon>Thermodesulfobacteriota</taxon>
        <taxon>Desulfuromonadia</taxon>
        <taxon>Geobacterales</taxon>
        <taxon>Geobacteraceae</taxon>
        <taxon>Citrifermentans</taxon>
    </lineage>
</organism>
<evidence type="ECO:0000255" key="1">
    <source>
        <dbReference type="HAMAP-Rule" id="MF_01456"/>
    </source>
</evidence>
<keyword id="KW-0997">Cell inner membrane</keyword>
<keyword id="KW-1003">Cell membrane</keyword>
<keyword id="KW-0472">Membrane</keyword>
<keyword id="KW-0520">NAD</keyword>
<keyword id="KW-0874">Quinone</keyword>
<keyword id="KW-1185">Reference proteome</keyword>
<keyword id="KW-1278">Translocase</keyword>
<keyword id="KW-0812">Transmembrane</keyword>
<keyword id="KW-1133">Transmembrane helix</keyword>
<keyword id="KW-0813">Transport</keyword>
<keyword id="KW-0830">Ubiquinone</keyword>
<comment type="function">
    <text evidence="1">NDH-1 shuttles electrons from NADH, via FMN and iron-sulfur (Fe-S) centers, to quinones in the respiratory chain. The immediate electron acceptor for the enzyme in this species is believed to be ubiquinone. Couples the redox reaction to proton translocation (for every two electrons transferred, four hydrogen ions are translocated across the cytoplasmic membrane), and thus conserves the redox energy in a proton gradient.</text>
</comment>
<comment type="catalytic activity">
    <reaction evidence="1">
        <text>a quinone + NADH + 5 H(+)(in) = a quinol + NAD(+) + 4 H(+)(out)</text>
        <dbReference type="Rhea" id="RHEA:57888"/>
        <dbReference type="ChEBI" id="CHEBI:15378"/>
        <dbReference type="ChEBI" id="CHEBI:24646"/>
        <dbReference type="ChEBI" id="CHEBI:57540"/>
        <dbReference type="ChEBI" id="CHEBI:57945"/>
        <dbReference type="ChEBI" id="CHEBI:132124"/>
    </reaction>
</comment>
<comment type="subunit">
    <text evidence="1">NDH-1 is composed of 14 different subunits. Subunits NuoA, H, J, K, L, M, N constitute the membrane sector of the complex.</text>
</comment>
<comment type="subcellular location">
    <subcellularLocation>
        <location evidence="1">Cell inner membrane</location>
        <topology evidence="1">Multi-pass membrane protein</topology>
    </subcellularLocation>
</comment>
<comment type="similarity">
    <text evidence="1">Belongs to the complex I subunit 4L family.</text>
</comment>
<gene>
    <name evidence="1" type="primary">nuoK2</name>
    <name type="ordered locus">Gbem_3916</name>
</gene>
<proteinExistence type="inferred from homology"/>
<feature type="chain" id="PRO_0000390075" description="NADH-quinone oxidoreductase subunit K 2">
    <location>
        <begin position="1"/>
        <end position="100"/>
    </location>
</feature>
<feature type="transmembrane region" description="Helical" evidence="1">
    <location>
        <begin position="2"/>
        <end position="22"/>
    </location>
</feature>
<feature type="transmembrane region" description="Helical" evidence="1">
    <location>
        <begin position="29"/>
        <end position="49"/>
    </location>
</feature>
<feature type="transmembrane region" description="Helical" evidence="1">
    <location>
        <begin position="61"/>
        <end position="81"/>
    </location>
</feature>
<protein>
    <recommendedName>
        <fullName evidence="1">NADH-quinone oxidoreductase subunit K 2</fullName>
        <ecNumber evidence="1">7.1.1.-</ecNumber>
    </recommendedName>
    <alternativeName>
        <fullName evidence="1">NADH dehydrogenase I subunit K 2</fullName>
    </alternativeName>
    <alternativeName>
        <fullName evidence="1">NDH-1 subunit K 2</fullName>
    </alternativeName>
</protein>
<reference key="1">
    <citation type="submission" date="2008-07" db="EMBL/GenBank/DDBJ databases">
        <title>Complete sequence of Geobacter bemidjiensis BEM.</title>
        <authorList>
            <consortium name="US DOE Joint Genome Institute"/>
            <person name="Lucas S."/>
            <person name="Copeland A."/>
            <person name="Lapidus A."/>
            <person name="Glavina del Rio T."/>
            <person name="Dalin E."/>
            <person name="Tice H."/>
            <person name="Bruce D."/>
            <person name="Goodwin L."/>
            <person name="Pitluck S."/>
            <person name="Kiss H."/>
            <person name="Brettin T."/>
            <person name="Detter J.C."/>
            <person name="Han C."/>
            <person name="Kuske C.R."/>
            <person name="Schmutz J."/>
            <person name="Larimer F."/>
            <person name="Land M."/>
            <person name="Hauser L."/>
            <person name="Kyrpides N."/>
            <person name="Lykidis A."/>
            <person name="Lovley D."/>
            <person name="Richardson P."/>
        </authorList>
    </citation>
    <scope>NUCLEOTIDE SEQUENCE [LARGE SCALE GENOMIC DNA]</scope>
    <source>
        <strain>ATCC BAA-1014 / DSM 16622 / JCM 12645 / Bem</strain>
    </source>
</reference>
<sequence length="100" mass="11061">MLAIENYLILSAILFSIGTIGVLTRRNAIVIFMCIEMMLNAVNLTFIAFSRHLGNIDGQVFVFFVMTVAAAEAAVGLALMIAFFKNRESIDVEDVNLMKL</sequence>
<accession>B5EFF3</accession>
<dbReference type="EC" id="7.1.1.-" evidence="1"/>
<dbReference type="EMBL" id="CP001124">
    <property type="protein sequence ID" value="ACH40908.1"/>
    <property type="molecule type" value="Genomic_DNA"/>
</dbReference>
<dbReference type="SMR" id="B5EFF3"/>
<dbReference type="STRING" id="404380.Gbem_3916"/>
<dbReference type="KEGG" id="gbm:Gbem_3916"/>
<dbReference type="eggNOG" id="COG0713">
    <property type="taxonomic scope" value="Bacteria"/>
</dbReference>
<dbReference type="HOGENOM" id="CLU_144724_0_0_7"/>
<dbReference type="OrthoDB" id="9810120at2"/>
<dbReference type="Proteomes" id="UP000008825">
    <property type="component" value="Chromosome"/>
</dbReference>
<dbReference type="GO" id="GO:0030964">
    <property type="term" value="C:NADH dehydrogenase complex"/>
    <property type="evidence" value="ECO:0007669"/>
    <property type="project" value="TreeGrafter"/>
</dbReference>
<dbReference type="GO" id="GO:0005886">
    <property type="term" value="C:plasma membrane"/>
    <property type="evidence" value="ECO:0007669"/>
    <property type="project" value="UniProtKB-SubCell"/>
</dbReference>
<dbReference type="GO" id="GO:0050136">
    <property type="term" value="F:NADH:ubiquinone reductase (non-electrogenic) activity"/>
    <property type="evidence" value="ECO:0007669"/>
    <property type="project" value="UniProtKB-UniRule"/>
</dbReference>
<dbReference type="GO" id="GO:0048038">
    <property type="term" value="F:quinone binding"/>
    <property type="evidence" value="ECO:0007669"/>
    <property type="project" value="UniProtKB-KW"/>
</dbReference>
<dbReference type="GO" id="GO:0042773">
    <property type="term" value="P:ATP synthesis coupled electron transport"/>
    <property type="evidence" value="ECO:0007669"/>
    <property type="project" value="InterPro"/>
</dbReference>
<dbReference type="FunFam" id="1.10.287.3510:FF:000001">
    <property type="entry name" value="NADH-quinone oxidoreductase subunit K"/>
    <property type="match status" value="1"/>
</dbReference>
<dbReference type="Gene3D" id="1.10.287.3510">
    <property type="match status" value="1"/>
</dbReference>
<dbReference type="HAMAP" id="MF_01456">
    <property type="entry name" value="NDH1_NuoK"/>
    <property type="match status" value="1"/>
</dbReference>
<dbReference type="InterPro" id="IPR001133">
    <property type="entry name" value="NADH_UbQ_OxRdtase_chain4L/K"/>
</dbReference>
<dbReference type="InterPro" id="IPR039428">
    <property type="entry name" value="NUOK/Mnh_C1-like"/>
</dbReference>
<dbReference type="NCBIfam" id="NF004320">
    <property type="entry name" value="PRK05715.1-2"/>
    <property type="match status" value="1"/>
</dbReference>
<dbReference type="NCBIfam" id="NF004321">
    <property type="entry name" value="PRK05715.1-3"/>
    <property type="match status" value="1"/>
</dbReference>
<dbReference type="NCBIfam" id="NF004323">
    <property type="entry name" value="PRK05715.1-5"/>
    <property type="match status" value="1"/>
</dbReference>
<dbReference type="PANTHER" id="PTHR11434:SF21">
    <property type="entry name" value="NADH DEHYDROGENASE SUBUNIT 4L-RELATED"/>
    <property type="match status" value="1"/>
</dbReference>
<dbReference type="PANTHER" id="PTHR11434">
    <property type="entry name" value="NADH-UBIQUINONE OXIDOREDUCTASE SUBUNIT ND4L"/>
    <property type="match status" value="1"/>
</dbReference>
<dbReference type="Pfam" id="PF00420">
    <property type="entry name" value="Oxidored_q2"/>
    <property type="match status" value="1"/>
</dbReference>